<sequence>MANIKSQIKRNRQNEKRRLRNKSVKSSLKTAIRKFHEAAETGDVEKATVLMRDAARKLDKAASKGVIHANQAANRKSAIAKRVASFSA</sequence>
<gene>
    <name evidence="1" type="primary">rpsT</name>
    <name type="ordered locus">Strop_3465</name>
</gene>
<comment type="function">
    <text evidence="1">Binds directly to 16S ribosomal RNA.</text>
</comment>
<comment type="similarity">
    <text evidence="1">Belongs to the bacterial ribosomal protein bS20 family.</text>
</comment>
<dbReference type="EMBL" id="CP000667">
    <property type="protein sequence ID" value="ABP55896.1"/>
    <property type="molecule type" value="Genomic_DNA"/>
</dbReference>
<dbReference type="RefSeq" id="WP_012014671.1">
    <property type="nucleotide sequence ID" value="NC_009380.1"/>
</dbReference>
<dbReference type="SMR" id="A4XAE7"/>
<dbReference type="STRING" id="369723.Strop_3465"/>
<dbReference type="KEGG" id="stp:Strop_3465"/>
<dbReference type="PATRIC" id="fig|369723.5.peg.3575"/>
<dbReference type="eggNOG" id="COG0268">
    <property type="taxonomic scope" value="Bacteria"/>
</dbReference>
<dbReference type="HOGENOM" id="CLU_160655_0_1_11"/>
<dbReference type="Proteomes" id="UP000000235">
    <property type="component" value="Chromosome"/>
</dbReference>
<dbReference type="GO" id="GO:0005829">
    <property type="term" value="C:cytosol"/>
    <property type="evidence" value="ECO:0007669"/>
    <property type="project" value="TreeGrafter"/>
</dbReference>
<dbReference type="GO" id="GO:0015935">
    <property type="term" value="C:small ribosomal subunit"/>
    <property type="evidence" value="ECO:0007669"/>
    <property type="project" value="TreeGrafter"/>
</dbReference>
<dbReference type="GO" id="GO:0070181">
    <property type="term" value="F:small ribosomal subunit rRNA binding"/>
    <property type="evidence" value="ECO:0007669"/>
    <property type="project" value="TreeGrafter"/>
</dbReference>
<dbReference type="GO" id="GO:0003735">
    <property type="term" value="F:structural constituent of ribosome"/>
    <property type="evidence" value="ECO:0007669"/>
    <property type="project" value="InterPro"/>
</dbReference>
<dbReference type="GO" id="GO:0006412">
    <property type="term" value="P:translation"/>
    <property type="evidence" value="ECO:0007669"/>
    <property type="project" value="UniProtKB-UniRule"/>
</dbReference>
<dbReference type="FunFam" id="1.20.58.110:FF:000001">
    <property type="entry name" value="30S ribosomal protein S20"/>
    <property type="match status" value="1"/>
</dbReference>
<dbReference type="Gene3D" id="1.20.58.110">
    <property type="entry name" value="Ribosomal protein S20"/>
    <property type="match status" value="1"/>
</dbReference>
<dbReference type="HAMAP" id="MF_00500">
    <property type="entry name" value="Ribosomal_bS20"/>
    <property type="match status" value="1"/>
</dbReference>
<dbReference type="InterPro" id="IPR002583">
    <property type="entry name" value="Ribosomal_bS20"/>
</dbReference>
<dbReference type="InterPro" id="IPR036510">
    <property type="entry name" value="Ribosomal_bS20_sf"/>
</dbReference>
<dbReference type="NCBIfam" id="TIGR00029">
    <property type="entry name" value="S20"/>
    <property type="match status" value="1"/>
</dbReference>
<dbReference type="PANTHER" id="PTHR33398">
    <property type="entry name" value="30S RIBOSOMAL PROTEIN S20"/>
    <property type="match status" value="1"/>
</dbReference>
<dbReference type="PANTHER" id="PTHR33398:SF1">
    <property type="entry name" value="SMALL RIBOSOMAL SUBUNIT PROTEIN BS20C"/>
    <property type="match status" value="1"/>
</dbReference>
<dbReference type="Pfam" id="PF01649">
    <property type="entry name" value="Ribosomal_S20p"/>
    <property type="match status" value="1"/>
</dbReference>
<dbReference type="SUPFAM" id="SSF46992">
    <property type="entry name" value="Ribosomal protein S20"/>
    <property type="match status" value="1"/>
</dbReference>
<organism>
    <name type="scientific">Salinispora tropica (strain ATCC BAA-916 / DSM 44818 / JCM 13857 / NBRC 105044 / CNB-440)</name>
    <dbReference type="NCBI Taxonomy" id="369723"/>
    <lineage>
        <taxon>Bacteria</taxon>
        <taxon>Bacillati</taxon>
        <taxon>Actinomycetota</taxon>
        <taxon>Actinomycetes</taxon>
        <taxon>Micromonosporales</taxon>
        <taxon>Micromonosporaceae</taxon>
        <taxon>Salinispora</taxon>
    </lineage>
</organism>
<feature type="chain" id="PRO_1000081447" description="Small ribosomal subunit protein bS20">
    <location>
        <begin position="1"/>
        <end position="88"/>
    </location>
</feature>
<feature type="region of interest" description="Disordered" evidence="2">
    <location>
        <begin position="1"/>
        <end position="28"/>
    </location>
</feature>
<feature type="compositionally biased region" description="Basic residues" evidence="2">
    <location>
        <begin position="7"/>
        <end position="23"/>
    </location>
</feature>
<accession>A4XAE7</accession>
<protein>
    <recommendedName>
        <fullName evidence="1">Small ribosomal subunit protein bS20</fullName>
    </recommendedName>
    <alternativeName>
        <fullName evidence="3">30S ribosomal protein S20</fullName>
    </alternativeName>
</protein>
<reference key="1">
    <citation type="journal article" date="2007" name="Proc. Natl. Acad. Sci. U.S.A.">
        <title>Genome sequencing reveals complex secondary metabolome in the marine actinomycete Salinispora tropica.</title>
        <authorList>
            <person name="Udwary D.W."/>
            <person name="Zeigler L."/>
            <person name="Asolkar R.N."/>
            <person name="Singan V."/>
            <person name="Lapidus A."/>
            <person name="Fenical W."/>
            <person name="Jensen P.R."/>
            <person name="Moore B.S."/>
        </authorList>
    </citation>
    <scope>NUCLEOTIDE SEQUENCE [LARGE SCALE GENOMIC DNA]</scope>
    <source>
        <strain>ATCC BAA-916 / DSM 44818 / JCM 13857 / NBRC 105044 / CNB-440</strain>
    </source>
</reference>
<name>RS20_SALTO</name>
<evidence type="ECO:0000255" key="1">
    <source>
        <dbReference type="HAMAP-Rule" id="MF_00500"/>
    </source>
</evidence>
<evidence type="ECO:0000256" key="2">
    <source>
        <dbReference type="SAM" id="MobiDB-lite"/>
    </source>
</evidence>
<evidence type="ECO:0000305" key="3"/>
<keyword id="KW-1185">Reference proteome</keyword>
<keyword id="KW-0687">Ribonucleoprotein</keyword>
<keyword id="KW-0689">Ribosomal protein</keyword>
<keyword id="KW-0694">RNA-binding</keyword>
<keyword id="KW-0699">rRNA-binding</keyword>
<proteinExistence type="inferred from homology"/>